<organism>
    <name type="scientific">Dehalococcoides mccartyi (strain CBDB1)</name>
    <dbReference type="NCBI Taxonomy" id="255470"/>
    <lineage>
        <taxon>Bacteria</taxon>
        <taxon>Bacillati</taxon>
        <taxon>Chloroflexota</taxon>
        <taxon>Dehalococcoidia</taxon>
        <taxon>Dehalococcoidales</taxon>
        <taxon>Dehalococcoidaceae</taxon>
        <taxon>Dehalococcoides</taxon>
    </lineage>
</organism>
<name>DAPA_DEHMC</name>
<proteinExistence type="inferred from homology"/>
<comment type="function">
    <text evidence="1">Catalyzes the condensation of (S)-aspartate-beta-semialdehyde [(S)-ASA] and pyruvate to 4-hydroxy-tetrahydrodipicolinate (HTPA).</text>
</comment>
<comment type="catalytic activity">
    <reaction evidence="1">
        <text>L-aspartate 4-semialdehyde + pyruvate = (2S,4S)-4-hydroxy-2,3,4,5-tetrahydrodipicolinate + H2O + H(+)</text>
        <dbReference type="Rhea" id="RHEA:34171"/>
        <dbReference type="ChEBI" id="CHEBI:15361"/>
        <dbReference type="ChEBI" id="CHEBI:15377"/>
        <dbReference type="ChEBI" id="CHEBI:15378"/>
        <dbReference type="ChEBI" id="CHEBI:67139"/>
        <dbReference type="ChEBI" id="CHEBI:537519"/>
        <dbReference type="EC" id="4.3.3.7"/>
    </reaction>
</comment>
<comment type="pathway">
    <text evidence="1">Amino-acid biosynthesis; L-lysine biosynthesis via DAP pathway; (S)-tetrahydrodipicolinate from L-aspartate: step 3/4.</text>
</comment>
<comment type="subunit">
    <text evidence="1">Homotetramer; dimer of dimers.</text>
</comment>
<comment type="subcellular location">
    <subcellularLocation>
        <location evidence="1">Cytoplasm</location>
    </subcellularLocation>
</comment>
<comment type="similarity">
    <text evidence="1">Belongs to the DapA family.</text>
</comment>
<comment type="caution">
    <text evidence="2">Was originally thought to be a dihydrodipicolinate synthase (DHDPS), catalyzing the condensation of (S)-aspartate-beta-semialdehyde [(S)-ASA] and pyruvate to dihydrodipicolinate (DHDP). However, it was shown in E.coli that the product of the enzymatic reaction is not dihydrodipicolinate but in fact (4S)-4-hydroxy-2,3,4,5-tetrahydro-(2S)-dipicolinic acid (HTPA), and that the consecutive dehydration reaction leading to DHDP is not spontaneous but catalyzed by DapB.</text>
</comment>
<protein>
    <recommendedName>
        <fullName evidence="1">4-hydroxy-tetrahydrodipicolinate synthase</fullName>
        <shortName evidence="1">HTPA synthase</shortName>
        <ecNumber evidence="1">4.3.3.7</ecNumber>
    </recommendedName>
</protein>
<gene>
    <name evidence="1" type="primary">dapA</name>
    <name type="ordered locus">cbdbA935</name>
</gene>
<accession>Q3ZXV3</accession>
<reference key="1">
    <citation type="journal article" date="2005" name="Nat. Biotechnol.">
        <title>Genome sequence of the chlorinated compound-respiring bacterium Dehalococcoides species strain CBDB1.</title>
        <authorList>
            <person name="Kube M."/>
            <person name="Beck A."/>
            <person name="Zinder S.H."/>
            <person name="Kuhl H."/>
            <person name="Reinhardt R."/>
            <person name="Adrian L."/>
        </authorList>
    </citation>
    <scope>NUCLEOTIDE SEQUENCE [LARGE SCALE GENOMIC DNA]</scope>
    <source>
        <strain>CBDB1</strain>
    </source>
</reference>
<keyword id="KW-0028">Amino-acid biosynthesis</keyword>
<keyword id="KW-0963">Cytoplasm</keyword>
<keyword id="KW-0220">Diaminopimelate biosynthesis</keyword>
<keyword id="KW-0456">Lyase</keyword>
<keyword id="KW-0457">Lysine biosynthesis</keyword>
<keyword id="KW-0704">Schiff base</keyword>
<feature type="chain" id="PRO_1000050185" description="4-hydroxy-tetrahydrodipicolinate synthase">
    <location>
        <begin position="1"/>
        <end position="297"/>
    </location>
</feature>
<feature type="active site" description="Proton donor/acceptor" evidence="1">
    <location>
        <position position="135"/>
    </location>
</feature>
<feature type="active site" description="Schiff-base intermediate with substrate" evidence="1">
    <location>
        <position position="163"/>
    </location>
</feature>
<feature type="binding site" evidence="1">
    <location>
        <position position="47"/>
    </location>
    <ligand>
        <name>pyruvate</name>
        <dbReference type="ChEBI" id="CHEBI:15361"/>
    </ligand>
</feature>
<feature type="binding site" evidence="1">
    <location>
        <position position="205"/>
    </location>
    <ligand>
        <name>pyruvate</name>
        <dbReference type="ChEBI" id="CHEBI:15361"/>
    </ligand>
</feature>
<feature type="site" description="Part of a proton relay during catalysis" evidence="1">
    <location>
        <position position="46"/>
    </location>
</feature>
<feature type="site" description="Part of a proton relay during catalysis" evidence="1">
    <location>
        <position position="109"/>
    </location>
</feature>
<sequence>MKELGRLITAMVTPFKTDGTVDYAQAQKLALGLLDSGSDGLVVVGTTGESPTVTWEEEHALFAAVKSAVGNRGKVIAGTGANSTQEALENTLKAEKIGVDACLLVVPYYNKPTQEGLYLHFKTIAEATKLPCILYNVPSRTITHMNPETVIRLSQIPNIVGIKEASGKLDDIAQIINNVRPDFTVWSGNDSDTLPMLAMGSYGVISVASHLVGNQIKDMITSFVSGNTEHAAAIHRHLTPLIRSLFVVSNPIPIKYALNYLGFEVGGLRLPMTEADEKTAALIRESLRGYTIDLPIK</sequence>
<dbReference type="EC" id="4.3.3.7" evidence="1"/>
<dbReference type="EMBL" id="AJ965256">
    <property type="protein sequence ID" value="CAI83063.1"/>
    <property type="molecule type" value="Genomic_DNA"/>
</dbReference>
<dbReference type="RefSeq" id="WP_011309414.1">
    <property type="nucleotide sequence ID" value="NC_007356.1"/>
</dbReference>
<dbReference type="SMR" id="Q3ZXV3"/>
<dbReference type="KEGG" id="deh:cbdbA935"/>
<dbReference type="HOGENOM" id="CLU_049343_7_1_0"/>
<dbReference type="UniPathway" id="UPA00034">
    <property type="reaction ID" value="UER00017"/>
</dbReference>
<dbReference type="Proteomes" id="UP000000433">
    <property type="component" value="Chromosome"/>
</dbReference>
<dbReference type="GO" id="GO:0005829">
    <property type="term" value="C:cytosol"/>
    <property type="evidence" value="ECO:0007669"/>
    <property type="project" value="TreeGrafter"/>
</dbReference>
<dbReference type="GO" id="GO:0008840">
    <property type="term" value="F:4-hydroxy-tetrahydrodipicolinate synthase activity"/>
    <property type="evidence" value="ECO:0007669"/>
    <property type="project" value="UniProtKB-UniRule"/>
</dbReference>
<dbReference type="GO" id="GO:0019877">
    <property type="term" value="P:diaminopimelate biosynthetic process"/>
    <property type="evidence" value="ECO:0007669"/>
    <property type="project" value="UniProtKB-UniRule"/>
</dbReference>
<dbReference type="GO" id="GO:0009089">
    <property type="term" value="P:lysine biosynthetic process via diaminopimelate"/>
    <property type="evidence" value="ECO:0007669"/>
    <property type="project" value="UniProtKB-UniRule"/>
</dbReference>
<dbReference type="CDD" id="cd00950">
    <property type="entry name" value="DHDPS"/>
    <property type="match status" value="1"/>
</dbReference>
<dbReference type="Gene3D" id="3.20.20.70">
    <property type="entry name" value="Aldolase class I"/>
    <property type="match status" value="1"/>
</dbReference>
<dbReference type="HAMAP" id="MF_00418">
    <property type="entry name" value="DapA"/>
    <property type="match status" value="1"/>
</dbReference>
<dbReference type="InterPro" id="IPR013785">
    <property type="entry name" value="Aldolase_TIM"/>
</dbReference>
<dbReference type="InterPro" id="IPR005263">
    <property type="entry name" value="DapA"/>
</dbReference>
<dbReference type="InterPro" id="IPR002220">
    <property type="entry name" value="DapA-like"/>
</dbReference>
<dbReference type="InterPro" id="IPR020625">
    <property type="entry name" value="Schiff_base-form_aldolases_AS"/>
</dbReference>
<dbReference type="InterPro" id="IPR020624">
    <property type="entry name" value="Schiff_base-form_aldolases_CS"/>
</dbReference>
<dbReference type="NCBIfam" id="TIGR00674">
    <property type="entry name" value="dapA"/>
    <property type="match status" value="1"/>
</dbReference>
<dbReference type="PANTHER" id="PTHR12128:SF66">
    <property type="entry name" value="4-HYDROXY-2-OXOGLUTARATE ALDOLASE, MITOCHONDRIAL"/>
    <property type="match status" value="1"/>
</dbReference>
<dbReference type="PANTHER" id="PTHR12128">
    <property type="entry name" value="DIHYDRODIPICOLINATE SYNTHASE"/>
    <property type="match status" value="1"/>
</dbReference>
<dbReference type="Pfam" id="PF00701">
    <property type="entry name" value="DHDPS"/>
    <property type="match status" value="1"/>
</dbReference>
<dbReference type="PIRSF" id="PIRSF001365">
    <property type="entry name" value="DHDPS"/>
    <property type="match status" value="1"/>
</dbReference>
<dbReference type="PRINTS" id="PR00146">
    <property type="entry name" value="DHPICSNTHASE"/>
</dbReference>
<dbReference type="SMART" id="SM01130">
    <property type="entry name" value="DHDPS"/>
    <property type="match status" value="1"/>
</dbReference>
<dbReference type="SUPFAM" id="SSF51569">
    <property type="entry name" value="Aldolase"/>
    <property type="match status" value="1"/>
</dbReference>
<dbReference type="PROSITE" id="PS00665">
    <property type="entry name" value="DHDPS_1"/>
    <property type="match status" value="1"/>
</dbReference>
<dbReference type="PROSITE" id="PS00666">
    <property type="entry name" value="DHDPS_2"/>
    <property type="match status" value="1"/>
</dbReference>
<evidence type="ECO:0000255" key="1">
    <source>
        <dbReference type="HAMAP-Rule" id="MF_00418"/>
    </source>
</evidence>
<evidence type="ECO:0000305" key="2"/>